<gene>
    <name evidence="1" type="primary">fbp</name>
    <name type="ordered locus">APP7_1455</name>
</gene>
<sequence>MKTLGEFIIEKQAEYPEAKGELSGILSSIRLAAKIIHREINRAGLSQDILGVAGSENIQGEAQMKLDVFANETMKKALLAREEVAGFASEEDDNFVAFENDRAKNAKYILMTDPLDGSSNIDVNVSVGTIFSIYKRVSPIGSPVTMEDFLQEGRKQVASGYVTYGSSTMLVYTTGNGVNGFTYDPSLGLFILSHPDMKMPTEGKYYSINEGQYVTFPMGVKKFIKYCQESDEATKRPYSSRYIGSLVSDFHRNLLKGGIYIYPTSTVYPKGKLRLLYEGNPMAFLAEQAGGMATDGFNPILDIKPSELHQRVPFFVGSTSMVKQADKFMQECAE</sequence>
<name>F16PA_ACTP7</name>
<organism>
    <name type="scientific">Actinobacillus pleuropneumoniae serotype 7 (strain AP76)</name>
    <dbReference type="NCBI Taxonomy" id="537457"/>
    <lineage>
        <taxon>Bacteria</taxon>
        <taxon>Pseudomonadati</taxon>
        <taxon>Pseudomonadota</taxon>
        <taxon>Gammaproteobacteria</taxon>
        <taxon>Pasteurellales</taxon>
        <taxon>Pasteurellaceae</taxon>
        <taxon>Actinobacillus</taxon>
    </lineage>
</organism>
<feature type="chain" id="PRO_0000364454" description="Fructose-1,6-bisphosphatase class 1">
    <location>
        <begin position="1"/>
        <end position="334"/>
    </location>
</feature>
<feature type="binding site" evidence="1">
    <location>
        <position position="90"/>
    </location>
    <ligand>
        <name>Mg(2+)</name>
        <dbReference type="ChEBI" id="CHEBI:18420"/>
        <label>1</label>
    </ligand>
</feature>
<feature type="binding site" evidence="1">
    <location>
        <position position="113"/>
    </location>
    <ligand>
        <name>Mg(2+)</name>
        <dbReference type="ChEBI" id="CHEBI:18420"/>
        <label>1</label>
    </ligand>
</feature>
<feature type="binding site" evidence="1">
    <location>
        <position position="113"/>
    </location>
    <ligand>
        <name>Mg(2+)</name>
        <dbReference type="ChEBI" id="CHEBI:18420"/>
        <label>2</label>
    </ligand>
</feature>
<feature type="binding site" evidence="1">
    <location>
        <position position="115"/>
    </location>
    <ligand>
        <name>Mg(2+)</name>
        <dbReference type="ChEBI" id="CHEBI:18420"/>
        <label>1</label>
    </ligand>
</feature>
<feature type="binding site" evidence="1">
    <location>
        <begin position="116"/>
        <end position="119"/>
    </location>
    <ligand>
        <name>substrate</name>
    </ligand>
</feature>
<feature type="binding site" evidence="1">
    <location>
        <position position="116"/>
    </location>
    <ligand>
        <name>Mg(2+)</name>
        <dbReference type="ChEBI" id="CHEBI:18420"/>
        <label>2</label>
    </ligand>
</feature>
<feature type="binding site" evidence="1">
    <location>
        <position position="209"/>
    </location>
    <ligand>
        <name>substrate</name>
    </ligand>
</feature>
<feature type="binding site" evidence="1">
    <location>
        <position position="242"/>
    </location>
    <ligand>
        <name>substrate</name>
    </ligand>
</feature>
<feature type="binding site" evidence="1">
    <location>
        <position position="272"/>
    </location>
    <ligand>
        <name>substrate</name>
    </ligand>
</feature>
<feature type="binding site" evidence="1">
    <location>
        <position position="278"/>
    </location>
    <ligand>
        <name>Mg(2+)</name>
        <dbReference type="ChEBI" id="CHEBI:18420"/>
        <label>2</label>
    </ligand>
</feature>
<evidence type="ECO:0000255" key="1">
    <source>
        <dbReference type="HAMAP-Rule" id="MF_01855"/>
    </source>
</evidence>
<keyword id="KW-0119">Carbohydrate metabolism</keyword>
<keyword id="KW-0963">Cytoplasm</keyword>
<keyword id="KW-0378">Hydrolase</keyword>
<keyword id="KW-0460">Magnesium</keyword>
<keyword id="KW-0479">Metal-binding</keyword>
<proteinExistence type="inferred from homology"/>
<protein>
    <recommendedName>
        <fullName evidence="1">Fructose-1,6-bisphosphatase class 1</fullName>
        <shortName evidence="1">FBPase class 1</shortName>
        <ecNumber evidence="1">3.1.3.11</ecNumber>
    </recommendedName>
    <alternativeName>
        <fullName evidence="1">D-fructose-1,6-bisphosphate 1-phosphohydrolase class 1</fullName>
    </alternativeName>
</protein>
<comment type="catalytic activity">
    <reaction evidence="1">
        <text>beta-D-fructose 1,6-bisphosphate + H2O = beta-D-fructose 6-phosphate + phosphate</text>
        <dbReference type="Rhea" id="RHEA:11064"/>
        <dbReference type="ChEBI" id="CHEBI:15377"/>
        <dbReference type="ChEBI" id="CHEBI:32966"/>
        <dbReference type="ChEBI" id="CHEBI:43474"/>
        <dbReference type="ChEBI" id="CHEBI:57634"/>
        <dbReference type="EC" id="3.1.3.11"/>
    </reaction>
</comment>
<comment type="cofactor">
    <cofactor evidence="1">
        <name>Mg(2+)</name>
        <dbReference type="ChEBI" id="CHEBI:18420"/>
    </cofactor>
    <text evidence="1">Binds 2 magnesium ions per subunit.</text>
</comment>
<comment type="pathway">
    <text evidence="1">Carbohydrate biosynthesis; gluconeogenesis.</text>
</comment>
<comment type="subunit">
    <text evidence="1">Homotetramer.</text>
</comment>
<comment type="subcellular location">
    <subcellularLocation>
        <location evidence="1">Cytoplasm</location>
    </subcellularLocation>
</comment>
<comment type="similarity">
    <text evidence="1">Belongs to the FBPase class 1 family.</text>
</comment>
<reference key="1">
    <citation type="submission" date="2008-06" db="EMBL/GenBank/DDBJ databases">
        <title>Genome and proteome analysis of A. pleuropneumoniae serotype 7.</title>
        <authorList>
            <person name="Linke B."/>
            <person name="Buettner F."/>
            <person name="Martinez-Arias R."/>
            <person name="Goesmann A."/>
            <person name="Baltes N."/>
            <person name="Tegetmeyer H."/>
            <person name="Singh M."/>
            <person name="Gerlach G.F."/>
        </authorList>
    </citation>
    <scope>NUCLEOTIDE SEQUENCE [LARGE SCALE GENOMIC DNA]</scope>
    <source>
        <strain>AP76</strain>
    </source>
</reference>
<accession>B3H282</accession>
<dbReference type="EC" id="3.1.3.11" evidence="1"/>
<dbReference type="EMBL" id="CP001091">
    <property type="protein sequence ID" value="ACE62107.1"/>
    <property type="molecule type" value="Genomic_DNA"/>
</dbReference>
<dbReference type="RefSeq" id="WP_005598591.1">
    <property type="nucleotide sequence ID" value="NC_010939.1"/>
</dbReference>
<dbReference type="SMR" id="B3H282"/>
<dbReference type="GeneID" id="48599665"/>
<dbReference type="KEGG" id="apa:APP7_1455"/>
<dbReference type="HOGENOM" id="CLU_039977_2_2_6"/>
<dbReference type="UniPathway" id="UPA00138"/>
<dbReference type="Proteomes" id="UP000001226">
    <property type="component" value="Chromosome"/>
</dbReference>
<dbReference type="GO" id="GO:0005829">
    <property type="term" value="C:cytosol"/>
    <property type="evidence" value="ECO:0007669"/>
    <property type="project" value="TreeGrafter"/>
</dbReference>
<dbReference type="GO" id="GO:0042132">
    <property type="term" value="F:fructose 1,6-bisphosphate 1-phosphatase activity"/>
    <property type="evidence" value="ECO:0007669"/>
    <property type="project" value="UniProtKB-UniRule"/>
</dbReference>
<dbReference type="GO" id="GO:0000287">
    <property type="term" value="F:magnesium ion binding"/>
    <property type="evidence" value="ECO:0007669"/>
    <property type="project" value="UniProtKB-UniRule"/>
</dbReference>
<dbReference type="GO" id="GO:0030388">
    <property type="term" value="P:fructose 1,6-bisphosphate metabolic process"/>
    <property type="evidence" value="ECO:0007669"/>
    <property type="project" value="TreeGrafter"/>
</dbReference>
<dbReference type="GO" id="GO:0006002">
    <property type="term" value="P:fructose 6-phosphate metabolic process"/>
    <property type="evidence" value="ECO:0007669"/>
    <property type="project" value="TreeGrafter"/>
</dbReference>
<dbReference type="GO" id="GO:0006000">
    <property type="term" value="P:fructose metabolic process"/>
    <property type="evidence" value="ECO:0007669"/>
    <property type="project" value="TreeGrafter"/>
</dbReference>
<dbReference type="GO" id="GO:0006094">
    <property type="term" value="P:gluconeogenesis"/>
    <property type="evidence" value="ECO:0007669"/>
    <property type="project" value="UniProtKB-UniRule"/>
</dbReference>
<dbReference type="GO" id="GO:0005986">
    <property type="term" value="P:sucrose biosynthetic process"/>
    <property type="evidence" value="ECO:0007669"/>
    <property type="project" value="TreeGrafter"/>
</dbReference>
<dbReference type="CDD" id="cd00354">
    <property type="entry name" value="FBPase"/>
    <property type="match status" value="1"/>
</dbReference>
<dbReference type="FunFam" id="3.30.540.10:FF:000002">
    <property type="entry name" value="Fructose-1,6-bisphosphatase class 1"/>
    <property type="match status" value="1"/>
</dbReference>
<dbReference type="FunFam" id="3.40.190.80:FF:000001">
    <property type="entry name" value="Fructose-1,6-bisphosphatase class 1"/>
    <property type="match status" value="1"/>
</dbReference>
<dbReference type="Gene3D" id="3.40.190.80">
    <property type="match status" value="1"/>
</dbReference>
<dbReference type="Gene3D" id="3.30.540.10">
    <property type="entry name" value="Fructose-1,6-Bisphosphatase, subunit A, domain 1"/>
    <property type="match status" value="1"/>
</dbReference>
<dbReference type="HAMAP" id="MF_01855">
    <property type="entry name" value="FBPase_class1"/>
    <property type="match status" value="1"/>
</dbReference>
<dbReference type="InterPro" id="IPR044015">
    <property type="entry name" value="FBPase_C_dom"/>
</dbReference>
<dbReference type="InterPro" id="IPR000146">
    <property type="entry name" value="FBPase_class-1"/>
</dbReference>
<dbReference type="InterPro" id="IPR033391">
    <property type="entry name" value="FBPase_N"/>
</dbReference>
<dbReference type="InterPro" id="IPR028343">
    <property type="entry name" value="FBPtase"/>
</dbReference>
<dbReference type="InterPro" id="IPR020548">
    <property type="entry name" value="Fructose_bisphosphatase_AS"/>
</dbReference>
<dbReference type="NCBIfam" id="NF006778">
    <property type="entry name" value="PRK09293.1-1"/>
    <property type="match status" value="1"/>
</dbReference>
<dbReference type="PANTHER" id="PTHR11556">
    <property type="entry name" value="FRUCTOSE-1,6-BISPHOSPHATASE-RELATED"/>
    <property type="match status" value="1"/>
</dbReference>
<dbReference type="PANTHER" id="PTHR11556:SF35">
    <property type="entry name" value="SEDOHEPTULOSE-1,7-BISPHOSPHATASE, CHLOROPLASTIC"/>
    <property type="match status" value="1"/>
</dbReference>
<dbReference type="Pfam" id="PF00316">
    <property type="entry name" value="FBPase"/>
    <property type="match status" value="1"/>
</dbReference>
<dbReference type="Pfam" id="PF18913">
    <property type="entry name" value="FBPase_C"/>
    <property type="match status" value="1"/>
</dbReference>
<dbReference type="PIRSF" id="PIRSF500210">
    <property type="entry name" value="FBPtase"/>
    <property type="match status" value="1"/>
</dbReference>
<dbReference type="PIRSF" id="PIRSF000904">
    <property type="entry name" value="FBPtase_SBPase"/>
    <property type="match status" value="1"/>
</dbReference>
<dbReference type="PRINTS" id="PR00115">
    <property type="entry name" value="F16BPHPHTASE"/>
</dbReference>
<dbReference type="SUPFAM" id="SSF56655">
    <property type="entry name" value="Carbohydrate phosphatase"/>
    <property type="match status" value="1"/>
</dbReference>
<dbReference type="PROSITE" id="PS00124">
    <property type="entry name" value="FBPASE"/>
    <property type="match status" value="1"/>
</dbReference>